<accession>A8A5C4</accession>
<organism>
    <name type="scientific">Escherichia coli O9:H4 (strain HS)</name>
    <dbReference type="NCBI Taxonomy" id="331112"/>
    <lineage>
        <taxon>Bacteria</taxon>
        <taxon>Pseudomonadati</taxon>
        <taxon>Pseudomonadota</taxon>
        <taxon>Gammaproteobacteria</taxon>
        <taxon>Enterobacterales</taxon>
        <taxon>Enterobacteriaceae</taxon>
        <taxon>Escherichia</taxon>
    </lineage>
</organism>
<gene>
    <name evidence="1" type="primary">rplD</name>
    <name type="ordered locus">EcHS_A3513</name>
</gene>
<name>RL4_ECOHS</name>
<comment type="function">
    <text evidence="1">One of the primary rRNA binding proteins, this protein initially binds near the 5'-end of the 23S rRNA. It is important during the early stages of 50S assembly. It makes multiple contacts with different domains of the 23S rRNA in the assembled 50S subunit and ribosome.</text>
</comment>
<comment type="function">
    <text evidence="1">Forms part of the polypeptide exit tunnel.</text>
</comment>
<comment type="subunit">
    <text evidence="1">Part of the 50S ribosomal subunit.</text>
</comment>
<comment type="similarity">
    <text evidence="1">Belongs to the universal ribosomal protein uL4 family.</text>
</comment>
<keyword id="KW-0687">Ribonucleoprotein</keyword>
<keyword id="KW-0689">Ribosomal protein</keyword>
<keyword id="KW-0694">RNA-binding</keyword>
<keyword id="KW-0699">rRNA-binding</keyword>
<evidence type="ECO:0000255" key="1">
    <source>
        <dbReference type="HAMAP-Rule" id="MF_01328"/>
    </source>
</evidence>
<evidence type="ECO:0000256" key="2">
    <source>
        <dbReference type="SAM" id="MobiDB-lite"/>
    </source>
</evidence>
<evidence type="ECO:0000305" key="3"/>
<protein>
    <recommendedName>
        <fullName evidence="1">Large ribosomal subunit protein uL4</fullName>
    </recommendedName>
    <alternativeName>
        <fullName evidence="3">50S ribosomal protein L4</fullName>
    </alternativeName>
</protein>
<sequence length="201" mass="22087">MELVLKDAQSALTVSETTFGRDFNEALVHQVVVAYAAGARQGTRAQKTRAEVTGSGKKPWRQKGTGRARSGSIKSPIWRSGGVTFAARPQDHSQKVNKKMYRGALKSILSELVRQDRLIVVEKFSVEAPKTKLLAQKLKDMALEDVLIITGELDENLFLAARNLHKVDVRDATGIDPVSLIAFDKVVMTADAVKQVEEMLA</sequence>
<reference key="1">
    <citation type="journal article" date="2008" name="J. Bacteriol.">
        <title>The pangenome structure of Escherichia coli: comparative genomic analysis of E. coli commensal and pathogenic isolates.</title>
        <authorList>
            <person name="Rasko D.A."/>
            <person name="Rosovitz M.J."/>
            <person name="Myers G.S.A."/>
            <person name="Mongodin E.F."/>
            <person name="Fricke W.F."/>
            <person name="Gajer P."/>
            <person name="Crabtree J."/>
            <person name="Sebaihia M."/>
            <person name="Thomson N.R."/>
            <person name="Chaudhuri R."/>
            <person name="Henderson I.R."/>
            <person name="Sperandio V."/>
            <person name="Ravel J."/>
        </authorList>
    </citation>
    <scope>NUCLEOTIDE SEQUENCE [LARGE SCALE GENOMIC DNA]</scope>
    <source>
        <strain>HS</strain>
    </source>
</reference>
<feature type="chain" id="PRO_1000067593" description="Large ribosomal subunit protein uL4">
    <location>
        <begin position="1"/>
        <end position="201"/>
    </location>
</feature>
<feature type="region of interest" description="Disordered" evidence="2">
    <location>
        <begin position="44"/>
        <end position="71"/>
    </location>
</feature>
<proteinExistence type="inferred from homology"/>
<dbReference type="EMBL" id="CP000802">
    <property type="protein sequence ID" value="ABV07728.1"/>
    <property type="molecule type" value="Genomic_DNA"/>
</dbReference>
<dbReference type="RefSeq" id="WP_000424395.1">
    <property type="nucleotide sequence ID" value="NC_009800.1"/>
</dbReference>
<dbReference type="SMR" id="A8A5C4"/>
<dbReference type="GeneID" id="97442859"/>
<dbReference type="KEGG" id="ecx:EcHS_A3513"/>
<dbReference type="HOGENOM" id="CLU_041575_5_2_6"/>
<dbReference type="GO" id="GO:1990904">
    <property type="term" value="C:ribonucleoprotein complex"/>
    <property type="evidence" value="ECO:0007669"/>
    <property type="project" value="UniProtKB-KW"/>
</dbReference>
<dbReference type="GO" id="GO:0005840">
    <property type="term" value="C:ribosome"/>
    <property type="evidence" value="ECO:0007669"/>
    <property type="project" value="UniProtKB-KW"/>
</dbReference>
<dbReference type="GO" id="GO:0019843">
    <property type="term" value="F:rRNA binding"/>
    <property type="evidence" value="ECO:0007669"/>
    <property type="project" value="UniProtKB-UniRule"/>
</dbReference>
<dbReference type="GO" id="GO:0003735">
    <property type="term" value="F:structural constituent of ribosome"/>
    <property type="evidence" value="ECO:0007669"/>
    <property type="project" value="InterPro"/>
</dbReference>
<dbReference type="GO" id="GO:0006412">
    <property type="term" value="P:translation"/>
    <property type="evidence" value="ECO:0007669"/>
    <property type="project" value="UniProtKB-UniRule"/>
</dbReference>
<dbReference type="FunFam" id="3.40.1370.10:FF:000001">
    <property type="entry name" value="50S ribosomal protein L4"/>
    <property type="match status" value="1"/>
</dbReference>
<dbReference type="Gene3D" id="3.40.1370.10">
    <property type="match status" value="1"/>
</dbReference>
<dbReference type="HAMAP" id="MF_01328_B">
    <property type="entry name" value="Ribosomal_uL4_B"/>
    <property type="match status" value="1"/>
</dbReference>
<dbReference type="InterPro" id="IPR002136">
    <property type="entry name" value="Ribosomal_uL4"/>
</dbReference>
<dbReference type="InterPro" id="IPR013005">
    <property type="entry name" value="Ribosomal_uL4-like"/>
</dbReference>
<dbReference type="InterPro" id="IPR023574">
    <property type="entry name" value="Ribosomal_uL4_dom_sf"/>
</dbReference>
<dbReference type="NCBIfam" id="TIGR03953">
    <property type="entry name" value="rplD_bact"/>
    <property type="match status" value="1"/>
</dbReference>
<dbReference type="PANTHER" id="PTHR10746">
    <property type="entry name" value="50S RIBOSOMAL PROTEIN L4"/>
    <property type="match status" value="1"/>
</dbReference>
<dbReference type="PANTHER" id="PTHR10746:SF6">
    <property type="entry name" value="LARGE RIBOSOMAL SUBUNIT PROTEIN UL4M"/>
    <property type="match status" value="1"/>
</dbReference>
<dbReference type="Pfam" id="PF00573">
    <property type="entry name" value="Ribosomal_L4"/>
    <property type="match status" value="1"/>
</dbReference>
<dbReference type="SUPFAM" id="SSF52166">
    <property type="entry name" value="Ribosomal protein L4"/>
    <property type="match status" value="1"/>
</dbReference>